<sequence>MLDIKWIRENPEALDAALAKRGAEPQAQSLVALDEKRRSAVQKAQDMLSRRNLASKEIGAAMAQKNGELAEKLKAEVAELKTLLPAIEEEDRQLTAELNDALSRIPNIPFDDVPVGKDEHDNVVTRTVGEKPRWNHTPKEHFEIGEALGYMDFERAAKLSGSRFTVLTGPLARLERALGQFMIDLHTREHGYTEVSSPLMVRAEALFGTGNLPKFEEDLFKTTDDRYLIPTAEVTLTNLVREEILEQEKLPLRFTALTPSFRSEAGSAGRDTRGMLRQHQFWKCELVSITDADSAIAEHERMTACAEEVLKRLGLHFRTMTLCTGDMGFGSRKTYDLEVWLPGQNAFREISSCSVCGDFQARRMNARYRGKDDKTNRFVHTLNGSGTAVGRCLIAVLENYLNEDGSVTIPDVLLPYMGGLTKIERAA</sequence>
<keyword id="KW-0030">Aminoacyl-tRNA synthetase</keyword>
<keyword id="KW-0067">ATP-binding</keyword>
<keyword id="KW-0963">Cytoplasm</keyword>
<keyword id="KW-0436">Ligase</keyword>
<keyword id="KW-0547">Nucleotide-binding</keyword>
<keyword id="KW-0648">Protein biosynthesis</keyword>
<proteinExistence type="inferred from homology"/>
<comment type="function">
    <text evidence="1">Catalyzes the attachment of serine to tRNA(Ser). Is also able to aminoacylate tRNA(Sec) with serine, to form the misacylated tRNA L-seryl-tRNA(Sec), which will be further converted into selenocysteinyl-tRNA(Sec).</text>
</comment>
<comment type="catalytic activity">
    <reaction evidence="1">
        <text>tRNA(Ser) + L-serine + ATP = L-seryl-tRNA(Ser) + AMP + diphosphate + H(+)</text>
        <dbReference type="Rhea" id="RHEA:12292"/>
        <dbReference type="Rhea" id="RHEA-COMP:9669"/>
        <dbReference type="Rhea" id="RHEA-COMP:9703"/>
        <dbReference type="ChEBI" id="CHEBI:15378"/>
        <dbReference type="ChEBI" id="CHEBI:30616"/>
        <dbReference type="ChEBI" id="CHEBI:33019"/>
        <dbReference type="ChEBI" id="CHEBI:33384"/>
        <dbReference type="ChEBI" id="CHEBI:78442"/>
        <dbReference type="ChEBI" id="CHEBI:78533"/>
        <dbReference type="ChEBI" id="CHEBI:456215"/>
        <dbReference type="EC" id="6.1.1.11"/>
    </reaction>
</comment>
<comment type="catalytic activity">
    <reaction evidence="1">
        <text>tRNA(Sec) + L-serine + ATP = L-seryl-tRNA(Sec) + AMP + diphosphate + H(+)</text>
        <dbReference type="Rhea" id="RHEA:42580"/>
        <dbReference type="Rhea" id="RHEA-COMP:9742"/>
        <dbReference type="Rhea" id="RHEA-COMP:10128"/>
        <dbReference type="ChEBI" id="CHEBI:15378"/>
        <dbReference type="ChEBI" id="CHEBI:30616"/>
        <dbReference type="ChEBI" id="CHEBI:33019"/>
        <dbReference type="ChEBI" id="CHEBI:33384"/>
        <dbReference type="ChEBI" id="CHEBI:78442"/>
        <dbReference type="ChEBI" id="CHEBI:78533"/>
        <dbReference type="ChEBI" id="CHEBI:456215"/>
        <dbReference type="EC" id="6.1.1.11"/>
    </reaction>
</comment>
<comment type="pathway">
    <text evidence="1">Aminoacyl-tRNA biosynthesis; selenocysteinyl-tRNA(Sec) biosynthesis; L-seryl-tRNA(Sec) from L-serine and tRNA(Sec): step 1/1.</text>
</comment>
<comment type="subunit">
    <text evidence="1">Homodimer. The tRNA molecule binds across the dimer.</text>
</comment>
<comment type="subcellular location">
    <subcellularLocation>
        <location evidence="1">Cytoplasm</location>
    </subcellularLocation>
</comment>
<comment type="domain">
    <text evidence="1">Consists of two distinct domains, a catalytic core and a N-terminal extension that is involved in tRNA binding.</text>
</comment>
<comment type="similarity">
    <text evidence="1">Belongs to the class-II aminoacyl-tRNA synthetase family. Type-1 seryl-tRNA synthetase subfamily.</text>
</comment>
<accession>B3PXU3</accession>
<reference key="1">
    <citation type="journal article" date="2010" name="Appl. Environ. Microbiol.">
        <title>Conserved symbiotic plasmid DNA sequences in the multireplicon pangenomic structure of Rhizobium etli.</title>
        <authorList>
            <person name="Gonzalez V."/>
            <person name="Acosta J.L."/>
            <person name="Santamaria R.I."/>
            <person name="Bustos P."/>
            <person name="Fernandez J.L."/>
            <person name="Hernandez Gonzalez I.L."/>
            <person name="Diaz R."/>
            <person name="Flores M."/>
            <person name="Palacios R."/>
            <person name="Mora J."/>
            <person name="Davila G."/>
        </authorList>
    </citation>
    <scope>NUCLEOTIDE SEQUENCE [LARGE SCALE GENOMIC DNA]</scope>
    <source>
        <strain>CIAT 652</strain>
    </source>
</reference>
<evidence type="ECO:0000255" key="1">
    <source>
        <dbReference type="HAMAP-Rule" id="MF_00176"/>
    </source>
</evidence>
<organism>
    <name type="scientific">Rhizobium etli (strain CIAT 652)</name>
    <dbReference type="NCBI Taxonomy" id="491916"/>
    <lineage>
        <taxon>Bacteria</taxon>
        <taxon>Pseudomonadati</taxon>
        <taxon>Pseudomonadota</taxon>
        <taxon>Alphaproteobacteria</taxon>
        <taxon>Hyphomicrobiales</taxon>
        <taxon>Rhizobiaceae</taxon>
        <taxon>Rhizobium/Agrobacterium group</taxon>
        <taxon>Rhizobium</taxon>
    </lineage>
</organism>
<gene>
    <name evidence="1" type="primary">serS</name>
    <name type="ordered locus">RHECIAT_CH0001912</name>
</gene>
<protein>
    <recommendedName>
        <fullName evidence="1">Serine--tRNA ligase</fullName>
        <ecNumber evidence="1">6.1.1.11</ecNumber>
    </recommendedName>
    <alternativeName>
        <fullName evidence="1">Seryl-tRNA synthetase</fullName>
        <shortName evidence="1">SerRS</shortName>
    </alternativeName>
    <alternativeName>
        <fullName evidence="1">Seryl-tRNA(Ser/Sec) synthetase</fullName>
    </alternativeName>
</protein>
<name>SYS_RHIE6</name>
<feature type="chain" id="PRO_1000098112" description="Serine--tRNA ligase">
    <location>
        <begin position="1"/>
        <end position="427"/>
    </location>
</feature>
<feature type="binding site" evidence="1">
    <location>
        <begin position="231"/>
        <end position="233"/>
    </location>
    <ligand>
        <name>L-serine</name>
        <dbReference type="ChEBI" id="CHEBI:33384"/>
    </ligand>
</feature>
<feature type="binding site" evidence="1">
    <location>
        <begin position="262"/>
        <end position="264"/>
    </location>
    <ligand>
        <name>ATP</name>
        <dbReference type="ChEBI" id="CHEBI:30616"/>
    </ligand>
</feature>
<feature type="binding site" evidence="1">
    <location>
        <position position="285"/>
    </location>
    <ligand>
        <name>L-serine</name>
        <dbReference type="ChEBI" id="CHEBI:33384"/>
    </ligand>
</feature>
<feature type="binding site" evidence="1">
    <location>
        <begin position="349"/>
        <end position="352"/>
    </location>
    <ligand>
        <name>ATP</name>
        <dbReference type="ChEBI" id="CHEBI:30616"/>
    </ligand>
</feature>
<feature type="binding site" evidence="1">
    <location>
        <position position="385"/>
    </location>
    <ligand>
        <name>L-serine</name>
        <dbReference type="ChEBI" id="CHEBI:33384"/>
    </ligand>
</feature>
<dbReference type="EC" id="6.1.1.11" evidence="1"/>
<dbReference type="EMBL" id="CP001074">
    <property type="protein sequence ID" value="ACE90879.1"/>
    <property type="molecule type" value="Genomic_DNA"/>
</dbReference>
<dbReference type="SMR" id="B3PXU3"/>
<dbReference type="KEGG" id="rec:RHECIAT_CH0001912"/>
<dbReference type="eggNOG" id="COG0172">
    <property type="taxonomic scope" value="Bacteria"/>
</dbReference>
<dbReference type="HOGENOM" id="CLU_023797_1_1_5"/>
<dbReference type="UniPathway" id="UPA00906">
    <property type="reaction ID" value="UER00895"/>
</dbReference>
<dbReference type="Proteomes" id="UP000008817">
    <property type="component" value="Chromosome"/>
</dbReference>
<dbReference type="GO" id="GO:0005737">
    <property type="term" value="C:cytoplasm"/>
    <property type="evidence" value="ECO:0007669"/>
    <property type="project" value="UniProtKB-SubCell"/>
</dbReference>
<dbReference type="GO" id="GO:0005524">
    <property type="term" value="F:ATP binding"/>
    <property type="evidence" value="ECO:0007669"/>
    <property type="project" value="UniProtKB-UniRule"/>
</dbReference>
<dbReference type="GO" id="GO:0004828">
    <property type="term" value="F:serine-tRNA ligase activity"/>
    <property type="evidence" value="ECO:0007669"/>
    <property type="project" value="UniProtKB-UniRule"/>
</dbReference>
<dbReference type="GO" id="GO:0016260">
    <property type="term" value="P:selenocysteine biosynthetic process"/>
    <property type="evidence" value="ECO:0007669"/>
    <property type="project" value="UniProtKB-UniRule"/>
</dbReference>
<dbReference type="GO" id="GO:0006434">
    <property type="term" value="P:seryl-tRNA aminoacylation"/>
    <property type="evidence" value="ECO:0007669"/>
    <property type="project" value="UniProtKB-UniRule"/>
</dbReference>
<dbReference type="CDD" id="cd00770">
    <property type="entry name" value="SerRS_core"/>
    <property type="match status" value="1"/>
</dbReference>
<dbReference type="Gene3D" id="3.30.930.10">
    <property type="entry name" value="Bira Bifunctional Protein, Domain 2"/>
    <property type="match status" value="1"/>
</dbReference>
<dbReference type="Gene3D" id="1.10.287.40">
    <property type="entry name" value="Serine-tRNA synthetase, tRNA binding domain"/>
    <property type="match status" value="1"/>
</dbReference>
<dbReference type="HAMAP" id="MF_00176">
    <property type="entry name" value="Ser_tRNA_synth_type1"/>
    <property type="match status" value="1"/>
</dbReference>
<dbReference type="InterPro" id="IPR002314">
    <property type="entry name" value="aa-tRNA-synt_IIb"/>
</dbReference>
<dbReference type="InterPro" id="IPR006195">
    <property type="entry name" value="aa-tRNA-synth_II"/>
</dbReference>
<dbReference type="InterPro" id="IPR045864">
    <property type="entry name" value="aa-tRNA-synth_II/BPL/LPL"/>
</dbReference>
<dbReference type="InterPro" id="IPR002317">
    <property type="entry name" value="Ser-tRNA-ligase_type_1"/>
</dbReference>
<dbReference type="InterPro" id="IPR015866">
    <property type="entry name" value="Ser-tRNA-synth_1_N"/>
</dbReference>
<dbReference type="InterPro" id="IPR042103">
    <property type="entry name" value="SerRS_1_N_sf"/>
</dbReference>
<dbReference type="InterPro" id="IPR033729">
    <property type="entry name" value="SerRS_core"/>
</dbReference>
<dbReference type="InterPro" id="IPR010978">
    <property type="entry name" value="tRNA-bd_arm"/>
</dbReference>
<dbReference type="NCBIfam" id="TIGR00414">
    <property type="entry name" value="serS"/>
    <property type="match status" value="1"/>
</dbReference>
<dbReference type="PANTHER" id="PTHR43697:SF1">
    <property type="entry name" value="SERINE--TRNA LIGASE"/>
    <property type="match status" value="1"/>
</dbReference>
<dbReference type="PANTHER" id="PTHR43697">
    <property type="entry name" value="SERYL-TRNA SYNTHETASE"/>
    <property type="match status" value="1"/>
</dbReference>
<dbReference type="Pfam" id="PF02403">
    <property type="entry name" value="Seryl_tRNA_N"/>
    <property type="match status" value="1"/>
</dbReference>
<dbReference type="Pfam" id="PF00587">
    <property type="entry name" value="tRNA-synt_2b"/>
    <property type="match status" value="1"/>
</dbReference>
<dbReference type="PIRSF" id="PIRSF001529">
    <property type="entry name" value="Ser-tRNA-synth_IIa"/>
    <property type="match status" value="1"/>
</dbReference>
<dbReference type="PRINTS" id="PR00981">
    <property type="entry name" value="TRNASYNTHSER"/>
</dbReference>
<dbReference type="SUPFAM" id="SSF55681">
    <property type="entry name" value="Class II aaRS and biotin synthetases"/>
    <property type="match status" value="1"/>
</dbReference>
<dbReference type="SUPFAM" id="SSF46589">
    <property type="entry name" value="tRNA-binding arm"/>
    <property type="match status" value="1"/>
</dbReference>
<dbReference type="PROSITE" id="PS50862">
    <property type="entry name" value="AA_TRNA_LIGASE_II"/>
    <property type="match status" value="1"/>
</dbReference>